<comment type="function">
    <text evidence="4 5">Catalyzes the formation of a covalent CysO-cysteine adduct via a sulfur transfer, using the thiocarboxylated sulfur carrier protein CysO-COSH as sulfur donor and O-phospho-L-serine (OPS) as sulfur acceptor. Can also use sodium sulfide as sulfur donor in vitro, albeit with less efficiency, but not thiosulfate or thio-nitro-benzoate. O-acetylserine (OAS) is a very poor substrate in comparison with OPS. May be of particular importance for cysteine biosynthesis in the persistent phase of M.tuberculosis.</text>
</comment>
<comment type="catalytic activity">
    <reaction evidence="4 5 6">
        <text>[CysO sulfur-carrier protein]-C-terminal-Gly-aminoethanethioate + O-phospho-L-serine + H(+) = [CysO sulfur-carrier protein]-Gly-NH-CH2-C(O)-S-L-Cys + phosphate</text>
        <dbReference type="Rhea" id="RHEA:48740"/>
        <dbReference type="Rhea" id="RHEA-COMP:12207"/>
        <dbReference type="Rhea" id="RHEA-COMP:19917"/>
        <dbReference type="ChEBI" id="CHEBI:15378"/>
        <dbReference type="ChEBI" id="CHEBI:43474"/>
        <dbReference type="ChEBI" id="CHEBI:57524"/>
        <dbReference type="ChEBI" id="CHEBI:90783"/>
        <dbReference type="ChEBI" id="CHEBI:232372"/>
        <dbReference type="EC" id="2.5.1.113"/>
    </reaction>
</comment>
<comment type="cofactor">
    <cofactor evidence="4">
        <name>pyridoxal 5'-phosphate</name>
        <dbReference type="ChEBI" id="CHEBI:597326"/>
    </cofactor>
</comment>
<comment type="pathway">
    <text>Amino-acid biosynthesis; L-cysteine biosynthesis.</text>
</comment>
<comment type="subunit">
    <text evidence="3 4 6">Homodimer.</text>
</comment>
<comment type="induction">
    <text evidence="1">Up-regulated under oxidative stress conditions.</text>
</comment>
<comment type="domain">
    <text evidence="6">The five C-terminal amino acid residues are inserted into the active site cleft in the closed conformation, protect the aminoacrylate intermediate and are involved in sulfur donor selectivity.</text>
</comment>
<comment type="disruption phenotype">
    <text evidence="2">Strains lacking this gene are shown to be attenuated in macrophages.</text>
</comment>
<comment type="similarity">
    <text evidence="8">Belongs to the cysteine synthase/cystathionine beta-synthase family.</text>
</comment>
<sequence>MTRYDSLLQALGNTPLVGLQRLSPRWDDGRDGPHVRLWAKLEDRNPTGSIKDRPAVRMIEQAEADGLLRPGATILEPTSGNTGISLAMAARLKGYRLICVMPENTSVERRQLLELYGAQIIFSAAEGGSNTAVATAKELAATNPSWVMLYQYGNPANTDSHYCGTGPELLADLPEITHFVAGLGTTGTLMGTGRFLREHVANVKIVAAEPRYGEGVYALRNMDEGFVPELYDPEILTARYSVGAVDAVRRTRELVHTEGIFAGISTGAVLHAALGVGAGALAAGERADIALVVADAGWKYLSTGAYAGSLDDAETALEGQLWA</sequence>
<name>CYSM_MYCTU</name>
<feature type="chain" id="PRO_0000167112" description="O-phosphoserine sulfhydrylase">
    <location>
        <begin position="1"/>
        <end position="323"/>
    </location>
</feature>
<feature type="binding site" evidence="3 4 6">
    <location>
        <position position="81"/>
    </location>
    <ligand>
        <name>pyridoxal 5'-phosphate</name>
        <dbReference type="ChEBI" id="CHEBI:597326"/>
    </ligand>
</feature>
<feature type="binding site">
    <location>
        <begin position="184"/>
        <end position="188"/>
    </location>
    <ligand>
        <name>pyridoxal 5'-phosphate</name>
        <dbReference type="ChEBI" id="CHEBI:597326"/>
    </ligand>
</feature>
<feature type="binding site" evidence="8">
    <location>
        <position position="220"/>
    </location>
    <ligand>
        <name>substrate</name>
    </ligand>
</feature>
<feature type="binding site" evidence="3 4 6">
    <location>
        <position position="265"/>
    </location>
    <ligand>
        <name>pyridoxal 5'-phosphate</name>
        <dbReference type="ChEBI" id="CHEBI:597326"/>
    </ligand>
</feature>
<feature type="modified residue" description="N6-(pyridoxal phosphate)lysine">
    <location>
        <position position="51"/>
    </location>
</feature>
<feature type="mutagenesis site" description="700-fold decrease in the rate of the first half-reaction using OPS. Affects neither the rate of the first half-reaction using OAS nor the rate of the second half-reaction using sulfide or CysO-COSH." evidence="4">
    <original>R</original>
    <variation>A</variation>
    <location>
        <position position="220"/>
    </location>
</feature>
<feature type="mutagenesis site" description="Decreased lifetime of the alpha-aminoacrylate reaction intermediate, increased susceptibility to oxidation by oxidative agents such as hydrogen peroxide, and partial loss of selectivity towards CysO-COSH as sulfur donor." evidence="6">
    <location>
        <begin position="319"/>
        <end position="323"/>
    </location>
</feature>
<feature type="strand" evidence="9">
    <location>
        <begin position="3"/>
        <end position="6"/>
    </location>
</feature>
<feature type="helix" evidence="9">
    <location>
        <begin position="8"/>
        <end position="10"/>
    </location>
</feature>
<feature type="strand" evidence="9">
    <location>
        <begin position="16"/>
        <end position="18"/>
    </location>
</feature>
<feature type="turn" evidence="9">
    <location>
        <begin position="20"/>
        <end position="22"/>
    </location>
</feature>
<feature type="strand" evidence="9">
    <location>
        <begin position="23"/>
        <end position="27"/>
    </location>
</feature>
<feature type="strand" evidence="9">
    <location>
        <begin position="35"/>
        <end position="41"/>
    </location>
</feature>
<feature type="helix" evidence="11">
    <location>
        <begin position="42"/>
        <end position="44"/>
    </location>
</feature>
<feature type="helix" evidence="9">
    <location>
        <begin position="52"/>
        <end position="64"/>
    </location>
</feature>
<feature type="strand" evidence="9">
    <location>
        <begin position="73"/>
        <end position="77"/>
    </location>
</feature>
<feature type="helix" evidence="9">
    <location>
        <begin position="81"/>
        <end position="93"/>
    </location>
</feature>
<feature type="strand" evidence="9">
    <location>
        <begin position="96"/>
        <end position="105"/>
    </location>
</feature>
<feature type="helix" evidence="9">
    <location>
        <begin position="107"/>
        <end position="116"/>
    </location>
</feature>
<feature type="strand" evidence="9">
    <location>
        <begin position="119"/>
        <end position="123"/>
    </location>
</feature>
<feature type="turn" evidence="9">
    <location>
        <begin position="126"/>
        <end position="128"/>
    </location>
</feature>
<feature type="helix" evidence="9">
    <location>
        <begin position="129"/>
        <end position="142"/>
    </location>
</feature>
<feature type="strand" evidence="10">
    <location>
        <begin position="146"/>
        <end position="148"/>
    </location>
</feature>
<feature type="turn" evidence="9">
    <location>
        <begin position="151"/>
        <end position="153"/>
    </location>
</feature>
<feature type="helix" evidence="9">
    <location>
        <begin position="155"/>
        <end position="163"/>
    </location>
</feature>
<feature type="helix" evidence="9">
    <location>
        <begin position="165"/>
        <end position="172"/>
    </location>
</feature>
<feature type="strand" evidence="9">
    <location>
        <begin position="178"/>
        <end position="182"/>
    </location>
</feature>
<feature type="strand" evidence="9">
    <location>
        <begin position="184"/>
        <end position="186"/>
    </location>
</feature>
<feature type="helix" evidence="9">
    <location>
        <begin position="187"/>
        <end position="199"/>
    </location>
</feature>
<feature type="strand" evidence="9">
    <location>
        <begin position="204"/>
        <end position="211"/>
    </location>
</feature>
<feature type="helix" evidence="9">
    <location>
        <begin position="214"/>
        <end position="217"/>
    </location>
</feature>
<feature type="helix" evidence="9">
    <location>
        <begin position="222"/>
        <end position="224"/>
    </location>
</feature>
<feature type="helix" evidence="9">
    <location>
        <begin position="233"/>
        <end position="235"/>
    </location>
</feature>
<feature type="strand" evidence="9">
    <location>
        <begin position="237"/>
        <end position="243"/>
    </location>
</feature>
<feature type="helix" evidence="9">
    <location>
        <begin position="244"/>
        <end position="258"/>
    </location>
</feature>
<feature type="helix" evidence="9">
    <location>
        <begin position="264"/>
        <end position="283"/>
    </location>
</feature>
<feature type="strand" evidence="9">
    <location>
        <begin position="287"/>
        <end position="293"/>
    </location>
</feature>
<feature type="helix" evidence="9">
    <location>
        <begin position="297"/>
        <end position="303"/>
    </location>
</feature>
<feature type="turn" evidence="9">
    <location>
        <begin position="304"/>
        <end position="306"/>
    </location>
</feature>
<feature type="helix" evidence="9">
    <location>
        <begin position="310"/>
        <end position="317"/>
    </location>
</feature>
<dbReference type="EC" id="2.5.1.113" evidence="4 5 6"/>
<dbReference type="EMBL" id="AL123456">
    <property type="protein sequence ID" value="CCP44094.1"/>
    <property type="molecule type" value="Genomic_DNA"/>
</dbReference>
<dbReference type="PIR" id="D70771">
    <property type="entry name" value="D70771"/>
</dbReference>
<dbReference type="RefSeq" id="NP_215852.1">
    <property type="nucleotide sequence ID" value="NC_000962.3"/>
</dbReference>
<dbReference type="RefSeq" id="WP_003406912.1">
    <property type="nucleotide sequence ID" value="NZ_NVQJ01000031.1"/>
</dbReference>
<dbReference type="PDB" id="3DKI">
    <property type="method" value="X-ray"/>
    <property type="resolution" value="2.10 A"/>
    <property type="chains" value="A/B=3-323"/>
</dbReference>
<dbReference type="PDB" id="3DWG">
    <property type="method" value="X-ray"/>
    <property type="resolution" value="1.53 A"/>
    <property type="chains" value="A/B=1-323"/>
</dbReference>
<dbReference type="PDB" id="3DWI">
    <property type="method" value="X-ray"/>
    <property type="resolution" value="2.81 A"/>
    <property type="chains" value="A/B=1-323"/>
</dbReference>
<dbReference type="PDB" id="3FGP">
    <property type="method" value="X-ray"/>
    <property type="resolution" value="2.05 A"/>
    <property type="chains" value="A/B=3-323"/>
</dbReference>
<dbReference type="PDB" id="5I6D">
    <property type="method" value="X-ray"/>
    <property type="resolution" value="1.64 A"/>
    <property type="chains" value="A/B/C/D=1-323"/>
</dbReference>
<dbReference type="PDB" id="5I7A">
    <property type="method" value="X-ray"/>
    <property type="resolution" value="2.08 A"/>
    <property type="chains" value="A/B/C/D=3-323"/>
</dbReference>
<dbReference type="PDB" id="5I7H">
    <property type="method" value="X-ray"/>
    <property type="resolution" value="2.57 A"/>
    <property type="chains" value="A/B/C/D=1-323"/>
</dbReference>
<dbReference type="PDB" id="5I7O">
    <property type="method" value="X-ray"/>
    <property type="resolution" value="2.49 A"/>
    <property type="chains" value="A/B/C/D=1-323"/>
</dbReference>
<dbReference type="PDB" id="5I7R">
    <property type="method" value="X-ray"/>
    <property type="resolution" value="1.73 A"/>
    <property type="chains" value="A/B=1-323"/>
</dbReference>
<dbReference type="PDB" id="5IW8">
    <property type="method" value="X-ray"/>
    <property type="resolution" value="2.04 A"/>
    <property type="chains" value="A/B=1-323"/>
</dbReference>
<dbReference type="PDB" id="5IWC">
    <property type="method" value="X-ray"/>
    <property type="resolution" value="2.70 A"/>
    <property type="chains" value="A/B=1-323"/>
</dbReference>
<dbReference type="PDBsum" id="3DKI"/>
<dbReference type="PDBsum" id="3DWG"/>
<dbReference type="PDBsum" id="3DWI"/>
<dbReference type="PDBsum" id="3FGP"/>
<dbReference type="PDBsum" id="5I6D"/>
<dbReference type="PDBsum" id="5I7A"/>
<dbReference type="PDBsum" id="5I7H"/>
<dbReference type="PDBsum" id="5I7O"/>
<dbReference type="PDBsum" id="5I7R"/>
<dbReference type="PDBsum" id="5IW8"/>
<dbReference type="PDBsum" id="5IWC"/>
<dbReference type="SMR" id="P9WP53"/>
<dbReference type="STRING" id="83332.Rv1336"/>
<dbReference type="BindingDB" id="P9WP53"/>
<dbReference type="ChEMBL" id="CHEMBL5291595"/>
<dbReference type="PaxDb" id="83332-Rv1336"/>
<dbReference type="DNASU" id="886867"/>
<dbReference type="GeneID" id="45425314"/>
<dbReference type="GeneID" id="886867"/>
<dbReference type="KEGG" id="mtu:Rv1336"/>
<dbReference type="KEGG" id="mtv:RVBD_1336"/>
<dbReference type="TubercuList" id="Rv1336"/>
<dbReference type="eggNOG" id="COG0031">
    <property type="taxonomic scope" value="Bacteria"/>
</dbReference>
<dbReference type="InParanoid" id="P9WP53"/>
<dbReference type="OrthoDB" id="9805733at2"/>
<dbReference type="PhylomeDB" id="P9WP53"/>
<dbReference type="BioCyc" id="MetaCyc:G185E-5515-MONOMER"/>
<dbReference type="BRENDA" id="2.5.1.113">
    <property type="organism ID" value="3445"/>
</dbReference>
<dbReference type="BRENDA" id="2.5.1.65">
    <property type="organism ID" value="3445"/>
</dbReference>
<dbReference type="Reactome" id="R-MTU-936654">
    <property type="pathway name" value="Cysteine synthesis from O-phosphoserine"/>
</dbReference>
<dbReference type="UniPathway" id="UPA00136"/>
<dbReference type="EvolutionaryTrace" id="P9WP53"/>
<dbReference type="Proteomes" id="UP000001584">
    <property type="component" value="Chromosome"/>
</dbReference>
<dbReference type="GO" id="GO:0005737">
    <property type="term" value="C:cytoplasm"/>
    <property type="evidence" value="ECO:0000318"/>
    <property type="project" value="GO_Central"/>
</dbReference>
<dbReference type="GO" id="GO:0005829">
    <property type="term" value="C:cytosol"/>
    <property type="evidence" value="ECO:0000304"/>
    <property type="project" value="Reactome"/>
</dbReference>
<dbReference type="GO" id="GO:0032991">
    <property type="term" value="C:protein-containing complex"/>
    <property type="evidence" value="ECO:0000314"/>
    <property type="project" value="MTBBASE"/>
</dbReference>
<dbReference type="GO" id="GO:0004124">
    <property type="term" value="F:cysteine synthase activity"/>
    <property type="evidence" value="ECO:0000318"/>
    <property type="project" value="GO_Central"/>
</dbReference>
<dbReference type="GO" id="GO:0033847">
    <property type="term" value="F:O-phosphoserine sulfhydrylase activity"/>
    <property type="evidence" value="ECO:0000314"/>
    <property type="project" value="MTBBASE"/>
</dbReference>
<dbReference type="GO" id="GO:0030170">
    <property type="term" value="F:pyridoxal phosphate binding"/>
    <property type="evidence" value="ECO:0000314"/>
    <property type="project" value="MTBBASE"/>
</dbReference>
<dbReference type="GO" id="GO:0019344">
    <property type="term" value="P:cysteine biosynthetic process"/>
    <property type="evidence" value="ECO:0000318"/>
    <property type="project" value="GO_Central"/>
</dbReference>
<dbReference type="GO" id="GO:0006535">
    <property type="term" value="P:cysteine biosynthetic process from serine"/>
    <property type="evidence" value="ECO:0000314"/>
    <property type="project" value="MTBBASE"/>
</dbReference>
<dbReference type="CDD" id="cd01561">
    <property type="entry name" value="CBS_like"/>
    <property type="match status" value="1"/>
</dbReference>
<dbReference type="FunFam" id="3.40.50.1100:FF:000023">
    <property type="entry name" value="Cysteine synthase"/>
    <property type="match status" value="1"/>
</dbReference>
<dbReference type="Gene3D" id="3.40.50.1100">
    <property type="match status" value="2"/>
</dbReference>
<dbReference type="InterPro" id="IPR005856">
    <property type="entry name" value="Cys_synth"/>
</dbReference>
<dbReference type="InterPro" id="IPR050214">
    <property type="entry name" value="Cys_Synth/Cystath_Beta-Synth"/>
</dbReference>
<dbReference type="InterPro" id="IPR001216">
    <property type="entry name" value="P-phosphate_BS"/>
</dbReference>
<dbReference type="InterPro" id="IPR001926">
    <property type="entry name" value="TrpB-like_PALP"/>
</dbReference>
<dbReference type="InterPro" id="IPR036052">
    <property type="entry name" value="TrpB-like_PALP_sf"/>
</dbReference>
<dbReference type="NCBIfam" id="TIGR01136">
    <property type="entry name" value="cysKM"/>
    <property type="match status" value="1"/>
</dbReference>
<dbReference type="PANTHER" id="PTHR10314">
    <property type="entry name" value="CYSTATHIONINE BETA-SYNTHASE"/>
    <property type="match status" value="1"/>
</dbReference>
<dbReference type="Pfam" id="PF00291">
    <property type="entry name" value="PALP"/>
    <property type="match status" value="1"/>
</dbReference>
<dbReference type="SUPFAM" id="SSF53686">
    <property type="entry name" value="Tryptophan synthase beta subunit-like PLP-dependent enzymes"/>
    <property type="match status" value="1"/>
</dbReference>
<dbReference type="PROSITE" id="PS00901">
    <property type="entry name" value="CYS_SYNTHASE"/>
    <property type="match status" value="1"/>
</dbReference>
<reference key="1">
    <citation type="journal article" date="1998" name="Nature">
        <title>Deciphering the biology of Mycobacterium tuberculosis from the complete genome sequence.</title>
        <authorList>
            <person name="Cole S.T."/>
            <person name="Brosch R."/>
            <person name="Parkhill J."/>
            <person name="Garnier T."/>
            <person name="Churcher C.M."/>
            <person name="Harris D.E."/>
            <person name="Gordon S.V."/>
            <person name="Eiglmeier K."/>
            <person name="Gas S."/>
            <person name="Barry C.E. III"/>
            <person name="Tekaia F."/>
            <person name="Badcock K."/>
            <person name="Basham D."/>
            <person name="Brown D."/>
            <person name="Chillingworth T."/>
            <person name="Connor R."/>
            <person name="Davies R.M."/>
            <person name="Devlin K."/>
            <person name="Feltwell T."/>
            <person name="Gentles S."/>
            <person name="Hamlin N."/>
            <person name="Holroyd S."/>
            <person name="Hornsby T."/>
            <person name="Jagels K."/>
            <person name="Krogh A."/>
            <person name="McLean J."/>
            <person name="Moule S."/>
            <person name="Murphy L.D."/>
            <person name="Oliver S."/>
            <person name="Osborne J."/>
            <person name="Quail M.A."/>
            <person name="Rajandream M.A."/>
            <person name="Rogers J."/>
            <person name="Rutter S."/>
            <person name="Seeger K."/>
            <person name="Skelton S."/>
            <person name="Squares S."/>
            <person name="Squares R."/>
            <person name="Sulston J.E."/>
            <person name="Taylor K."/>
            <person name="Whitehead S."/>
            <person name="Barrell B.G."/>
        </authorList>
    </citation>
    <scope>NUCLEOTIDE SEQUENCE [LARGE SCALE GENOMIC DNA]</scope>
    <source>
        <strain>ATCC 25618 / H37Rv</strain>
    </source>
</reference>
<reference key="2">
    <citation type="journal article" date="2002" name="Mol. Microbiol.">
        <title>Role of the extracytoplasmic-function sigma factor sigma(H) in Mycobacterium tuberculosis global gene expression.</title>
        <authorList>
            <person name="Manganelli R."/>
            <person name="Voskuil M.I."/>
            <person name="Schoolnik G.K."/>
            <person name="Dubnau E."/>
            <person name="Gomez M."/>
            <person name="Smith I."/>
        </authorList>
    </citation>
    <scope>INDUCTION</scope>
    <source>
        <strain>ATCC 25618 / H37Rv</strain>
    </source>
</reference>
<reference key="3">
    <citation type="journal article" date="2005" name="Proc. Natl. Acad. Sci. U.S.A.">
        <title>Genome-wide requirements for Mycobacterium tuberculosis adaptation and survival in macrophages.</title>
        <authorList>
            <person name="Rengarajan J."/>
            <person name="Bloom B.R."/>
            <person name="Rubin E.J."/>
        </authorList>
    </citation>
    <scope>DISRUPTION PHENOTYPE</scope>
    <source>
        <strain>ATCC 25618 / H37Rv</strain>
    </source>
</reference>
<reference key="4">
    <citation type="journal article" date="2008" name="Biochemistry">
        <title>O-phospho-L-serine and the thiocarboxylated sulfur carrier protein CysO-COSH are substrates for CysM, a cysteine synthase from Mycobacterium tuberculosis.</title>
        <authorList>
            <person name="O'Leary S.E."/>
            <person name="Jurgenson C.T."/>
            <person name="Ealick S.E."/>
            <person name="Begley T.P."/>
        </authorList>
    </citation>
    <scope>FUNCTION</scope>
    <scope>CATALYTIC ACTIVITY</scope>
    <scope>SUBSTRATE SPECIFICITY</scope>
    <scope>KINETIC STUDIES</scope>
    <scope>REACTION MECHANISM</scope>
</reference>
<reference key="5">
    <citation type="journal article" date="2011" name="Mol. Cell. Proteomics">
        <title>Proteogenomic analysis of Mycobacterium tuberculosis by high resolution mass spectrometry.</title>
        <authorList>
            <person name="Kelkar D.S."/>
            <person name="Kumar D."/>
            <person name="Kumar P."/>
            <person name="Balakrishnan L."/>
            <person name="Muthusamy B."/>
            <person name="Yadav A.K."/>
            <person name="Shrivastava P."/>
            <person name="Marimuthu A."/>
            <person name="Anand S."/>
            <person name="Sundaram H."/>
            <person name="Kingsbury R."/>
            <person name="Harsha H.C."/>
            <person name="Nair B."/>
            <person name="Prasad T.S."/>
            <person name="Chauhan D.S."/>
            <person name="Katoch K."/>
            <person name="Katoch V.M."/>
            <person name="Kumar P."/>
            <person name="Chaerkady R."/>
            <person name="Ramachandran S."/>
            <person name="Dash D."/>
            <person name="Pandey A."/>
        </authorList>
    </citation>
    <scope>IDENTIFICATION BY MASS SPECTROMETRY [LARGE SCALE ANALYSIS]</scope>
    <source>
        <strain>ATCC 25618 / H37Rv</strain>
    </source>
</reference>
<reference key="6">
    <citation type="journal article" date="2008" name="Biochemistry">
        <title>Crystal structure of a sulfur carrier protein complex found in the cysteine biosynthetic pathway of Mycobacterium tuberculosis.</title>
        <authorList>
            <person name="Jurgenson C.T."/>
            <person name="Burns K.E."/>
            <person name="Begley T.P."/>
            <person name="Ealick S.E."/>
        </authorList>
    </citation>
    <scope>X-RAY CRYSTALLOGRAPHY (1.53 ANGSTROMS) OF WILD-TYPE AND MUTANT ALA-204 IN COMPLEX WITH PYRIDOXAL PHOSPHATE AND PROTEIN CYSO</scope>
    <scope>REACTION MECHANISM</scope>
</reference>
<reference key="7">
    <citation type="journal article" date="2008" name="J. Biol. Chem.">
        <title>Cysteine synthase (CysM) of Mycobacterium tuberculosis is an O-phosphoserine sulfhydrylase: evidence for an alternative cysteine biosynthesis pathway in mycobacteria.</title>
        <authorList>
            <person name="Agren D."/>
            <person name="Schnell R."/>
            <person name="Oehlmann W."/>
            <person name="Singh M."/>
            <person name="Schneider G."/>
        </authorList>
    </citation>
    <scope>X-RAY CRYSTALLOGRAPHY (2.1 ANGSTROMS) OF 3-323 IN COMPLEX WITH PYRIDOXAL PHOSPHATE</scope>
    <scope>FUNCTION</scope>
    <scope>CATALYTIC ACTIVITY</scope>
    <scope>COFACTOR</scope>
    <scope>SUBSTRATE SPECIFICITY</scope>
    <scope>SUBUNIT</scope>
    <scope>MUTAGENESIS OF ARG-220</scope>
    <source>
        <strain>ATCC 25618 / H37Rv</strain>
    </source>
</reference>
<reference key="8">
    <citation type="journal article" date="2009" name="FEBS Lett.">
        <title>The C-terminal of CysM from Mycobacterium tuberculosis protects the aminoacrylate intermediate and is involved in sulfur donor selectivity.</title>
        <authorList>
            <person name="Agren D."/>
            <person name="Schnell R."/>
            <person name="Schneider G."/>
        </authorList>
    </citation>
    <scope>X-RAY CRYSTALLOGRAPHY (2.05 ANGSTROMS) OF 3-323 IN COMPLEX WITH PYRIDOXAL PHOSPHATE</scope>
    <scope>CATALYTIC ACTIVITY</scope>
    <scope>DOMAIN</scope>
    <scope>MUTAGENESIS OF 319-GLY--ALA-323</scope>
    <source>
        <strain>ATCC 25618 / H37Rv</strain>
    </source>
</reference>
<accession>P9WP53</accession>
<accession>L0T934</accession>
<accession>P63873</accession>
<accession>Q10624</accession>
<protein>
    <recommendedName>
        <fullName evidence="7">O-phosphoserine sulfhydrylase</fullName>
        <shortName>OPS sulfhydrylase</shortName>
        <ecNumber evidence="4 5 6">2.5.1.113</ecNumber>
    </recommendedName>
    <alternativeName>
        <fullName>CysO-thiocarboxylate-dependent cysteine synthase</fullName>
    </alternativeName>
    <alternativeName>
        <fullName>Cysteine synthase B</fullName>
        <shortName>CSase B</shortName>
    </alternativeName>
    <alternativeName>
        <fullName>O-phosphoserine-specific cysteine synthase</fullName>
    </alternativeName>
    <alternativeName>
        <fullName>[CysO sulfur-carrier protein]-thiocarboxylate-dependent cysteine synthase</fullName>
    </alternativeName>
</protein>
<proteinExistence type="evidence at protein level"/>
<gene>
    <name type="primary">cysM</name>
    <name type="ordered locus">Rv1336</name>
    <name type="ORF">MTCY130.21</name>
</gene>
<organism>
    <name type="scientific">Mycobacterium tuberculosis (strain ATCC 25618 / H37Rv)</name>
    <dbReference type="NCBI Taxonomy" id="83332"/>
    <lineage>
        <taxon>Bacteria</taxon>
        <taxon>Bacillati</taxon>
        <taxon>Actinomycetota</taxon>
        <taxon>Actinomycetes</taxon>
        <taxon>Mycobacteriales</taxon>
        <taxon>Mycobacteriaceae</taxon>
        <taxon>Mycobacterium</taxon>
        <taxon>Mycobacterium tuberculosis complex</taxon>
    </lineage>
</organism>
<keyword id="KW-0002">3D-structure</keyword>
<keyword id="KW-0028">Amino-acid biosynthesis</keyword>
<keyword id="KW-0198">Cysteine biosynthesis</keyword>
<keyword id="KW-0663">Pyridoxal phosphate</keyword>
<keyword id="KW-1185">Reference proteome</keyword>
<keyword id="KW-0808">Transferase</keyword>
<evidence type="ECO:0000269" key="1">
    <source>
    </source>
</evidence>
<evidence type="ECO:0000269" key="2">
    <source>
    </source>
</evidence>
<evidence type="ECO:0000269" key="3">
    <source>
    </source>
</evidence>
<evidence type="ECO:0000269" key="4">
    <source>
    </source>
</evidence>
<evidence type="ECO:0000269" key="5">
    <source>
    </source>
</evidence>
<evidence type="ECO:0000269" key="6">
    <source>
    </source>
</evidence>
<evidence type="ECO:0000303" key="7">
    <source>
    </source>
</evidence>
<evidence type="ECO:0000305" key="8"/>
<evidence type="ECO:0007829" key="9">
    <source>
        <dbReference type="PDB" id="3DWG"/>
    </source>
</evidence>
<evidence type="ECO:0007829" key="10">
    <source>
        <dbReference type="PDB" id="5I7R"/>
    </source>
</evidence>
<evidence type="ECO:0007829" key="11">
    <source>
        <dbReference type="PDB" id="5IW8"/>
    </source>
</evidence>